<protein>
    <recommendedName>
        <fullName>Nodulation protein J</fullName>
    </recommendedName>
</protein>
<organism>
    <name type="scientific">Azorhizobium caulinodans (strain ATCC 43989 / DSM 5975 / JCM 20966 / LMG 6465 / NBRC 14845 / NCIMB 13405 / ORS 571)</name>
    <dbReference type="NCBI Taxonomy" id="438753"/>
    <lineage>
        <taxon>Bacteria</taxon>
        <taxon>Pseudomonadati</taxon>
        <taxon>Pseudomonadota</taxon>
        <taxon>Alphaproteobacteria</taxon>
        <taxon>Hyphomicrobiales</taxon>
        <taxon>Xanthobacteraceae</taxon>
        <taxon>Azorhizobium</taxon>
    </lineage>
</organism>
<gene>
    <name type="primary">nodJ</name>
    <name type="ordered locus">AZC_3812</name>
</gene>
<reference key="1">
    <citation type="journal article" date="1993" name="Mol. Microbiol.">
        <title>Identification of nodSUIJ genes in Nod locus 1 of Azorhizobium caulinodans: evidence that nodS encodes a methyltransferase involved in Nod factor modification.</title>
        <authorList>
            <person name="Geelen D."/>
            <person name="Mergaert P."/>
            <person name="Geremia R.A."/>
            <person name="Goormachtig S."/>
            <person name="van Montagu M."/>
            <person name="Holsters M."/>
        </authorList>
    </citation>
    <scope>NUCLEOTIDE SEQUENCE [GENOMIC DNA]</scope>
</reference>
<reference key="2">
    <citation type="submission" date="2007-04" db="EMBL/GenBank/DDBJ databases">
        <title>Complete genome sequence of the nitrogen-fixing bacterium Azorhizobium caulinodans ORS571.</title>
        <authorList>
            <person name="Lee K.B."/>
            <person name="Backer P.D."/>
            <person name="Aono T."/>
            <person name="Liu C.T."/>
            <person name="Suzuki S."/>
            <person name="Suzuki T."/>
            <person name="Kaneko T."/>
            <person name="Yamada M."/>
            <person name="Tabata S."/>
            <person name="Kupfer D.M."/>
            <person name="Najar F.Z."/>
            <person name="Wiley G.B."/>
            <person name="Roe B."/>
            <person name="Binnewies T."/>
            <person name="Ussery D."/>
            <person name="Vereecke D."/>
            <person name="Gevers D."/>
            <person name="Holsters M."/>
            <person name="Oyaizu H."/>
        </authorList>
    </citation>
    <scope>NUCLEOTIDE SEQUENCE [LARGE SCALE GENOMIC DNA]</scope>
    <source>
        <strain>ATCC 43989 / DSM 5975 / JCM 20966 / LMG 6465 / NBRC 14845 / NCIMB 13405 / ORS 571</strain>
    </source>
</reference>
<evidence type="ECO:0000250" key="1"/>
<evidence type="ECO:0000255" key="2"/>
<evidence type="ECO:0000255" key="3">
    <source>
        <dbReference type="PROSITE-ProRule" id="PRU00442"/>
    </source>
</evidence>
<evidence type="ECO:0000305" key="4"/>
<feature type="chain" id="PRO_0000182984" description="Nodulation protein J">
    <location>
        <begin position="1"/>
        <end position="254"/>
    </location>
</feature>
<feature type="transmembrane region" description="Helical" evidence="2">
    <location>
        <begin position="25"/>
        <end position="45"/>
    </location>
</feature>
<feature type="transmembrane region" description="Helical" evidence="2">
    <location>
        <begin position="60"/>
        <end position="80"/>
    </location>
</feature>
<feature type="transmembrane region" description="Helical" evidence="2">
    <location>
        <begin position="106"/>
        <end position="126"/>
    </location>
</feature>
<feature type="transmembrane region" description="Helical" evidence="2">
    <location>
        <begin position="133"/>
        <end position="153"/>
    </location>
</feature>
<feature type="transmembrane region" description="Helical" evidence="2">
    <location>
        <begin position="169"/>
        <end position="189"/>
    </location>
</feature>
<feature type="transmembrane region" description="Helical" evidence="2">
    <location>
        <begin position="230"/>
        <end position="250"/>
    </location>
</feature>
<feature type="domain" description="ABC transmembrane type-2" evidence="3">
    <location>
        <begin position="25"/>
        <end position="251"/>
    </location>
</feature>
<comment type="function">
    <text evidence="1">Part of the ABC transporter complex NodIJ involved in the export of the nodulation factors (Nod factors), the bacterial signal molecules that induce symbiosis and subsequent nodulation induction. Nod factors are LCO (lipo-chitin oligosaccharide), a modified beta-1,4-linked N-acetylglucosamine oligosaccharide. This subunit encodes the transporter (By similarity).</text>
</comment>
<comment type="subunit">
    <text evidence="4">The complex is composed of two ATP-binding proteins (NodI) and two transmembrane proteins (NodJ).</text>
</comment>
<comment type="subcellular location">
    <subcellularLocation>
        <location evidence="4">Cell inner membrane</location>
        <topology evidence="4">Multi-pass membrane protein</topology>
    </subcellularLocation>
</comment>
<comment type="similarity">
    <text evidence="4">Belongs to the ABC-2 integral membrane protein family. Lipooligosaccharide exporter (TC 3.A.1.102) subfamily.</text>
</comment>
<dbReference type="EMBL" id="L18897">
    <property type="protein sequence ID" value="AAB51168.1"/>
    <property type="molecule type" value="Genomic_DNA"/>
</dbReference>
<dbReference type="EMBL" id="AP009384">
    <property type="protein sequence ID" value="BAF89810.1"/>
    <property type="molecule type" value="Genomic_DNA"/>
</dbReference>
<dbReference type="PIR" id="S35008">
    <property type="entry name" value="S35008"/>
</dbReference>
<dbReference type="STRING" id="438753.AZC_3812"/>
<dbReference type="TCDB" id="3.A.1.102.2">
    <property type="family name" value="the atp-binding cassette (abc) superfamily"/>
</dbReference>
<dbReference type="KEGG" id="azc:AZC_3812"/>
<dbReference type="eggNOG" id="COG0842">
    <property type="taxonomic scope" value="Bacteria"/>
</dbReference>
<dbReference type="HOGENOM" id="CLU_039483_3_1_5"/>
<dbReference type="Proteomes" id="UP000000270">
    <property type="component" value="Chromosome"/>
</dbReference>
<dbReference type="GO" id="GO:0043190">
    <property type="term" value="C:ATP-binding cassette (ABC) transporter complex"/>
    <property type="evidence" value="ECO:0007669"/>
    <property type="project" value="InterPro"/>
</dbReference>
<dbReference type="GO" id="GO:0140359">
    <property type="term" value="F:ABC-type transporter activity"/>
    <property type="evidence" value="ECO:0007669"/>
    <property type="project" value="InterPro"/>
</dbReference>
<dbReference type="GO" id="GO:0015772">
    <property type="term" value="P:oligosaccharide transport"/>
    <property type="evidence" value="ECO:0007669"/>
    <property type="project" value="InterPro"/>
</dbReference>
<dbReference type="InterPro" id="IPR013525">
    <property type="entry name" value="ABC2_TM"/>
</dbReference>
<dbReference type="InterPro" id="IPR047817">
    <property type="entry name" value="ABC2_TM_bact-type"/>
</dbReference>
<dbReference type="InterPro" id="IPR000412">
    <property type="entry name" value="ABC_2_transport"/>
</dbReference>
<dbReference type="InterPro" id="IPR005981">
    <property type="entry name" value="ABC_transptNodJ"/>
</dbReference>
<dbReference type="InterPro" id="IPR051784">
    <property type="entry name" value="Nod_factor_ABC_transporter"/>
</dbReference>
<dbReference type="NCBIfam" id="TIGR01291">
    <property type="entry name" value="nodJ"/>
    <property type="match status" value="1"/>
</dbReference>
<dbReference type="PANTHER" id="PTHR43229">
    <property type="entry name" value="NODULATION PROTEIN J"/>
    <property type="match status" value="1"/>
</dbReference>
<dbReference type="PANTHER" id="PTHR43229:SF2">
    <property type="entry name" value="NODULATION PROTEIN J"/>
    <property type="match status" value="1"/>
</dbReference>
<dbReference type="Pfam" id="PF01061">
    <property type="entry name" value="ABC2_membrane"/>
    <property type="match status" value="1"/>
</dbReference>
<dbReference type="PIRSF" id="PIRSF006648">
    <property type="entry name" value="DrrB"/>
    <property type="match status" value="1"/>
</dbReference>
<dbReference type="PRINTS" id="PR00164">
    <property type="entry name" value="ABC2TRNSPORT"/>
</dbReference>
<dbReference type="PROSITE" id="PS51012">
    <property type="entry name" value="ABC_TM2"/>
    <property type="match status" value="1"/>
</dbReference>
<sequence length="254" mass="27702">MRERMVTWAAVFQRNAMSWRREMAASVLGSVIDPLIMLFGLGVGLGKIVDSVDGRSYAEFLACGLILTSAMSASNYEMLYGTYSRIYVTGTLKSMRYAPICVSDYLIGEVLWAAYEGVVAGTIVAVCTAFLGYIPGWSVIYILPDILFVALIFSSTSLLVAAISRGYALFAFYQSIAIAPLVFLSGVIVPRFTGNDVISGMIHFSPLYRAVNDVRNVVYEGRGTQVGPLLLLSLLYASVMVFISAKVICVRLDD</sequence>
<proteinExistence type="inferred from homology"/>
<name>NODJ_AZOC5</name>
<keyword id="KW-0997">Cell inner membrane</keyword>
<keyword id="KW-1003">Cell membrane</keyword>
<keyword id="KW-0472">Membrane</keyword>
<keyword id="KW-0536">Nodulation</keyword>
<keyword id="KW-1185">Reference proteome</keyword>
<keyword id="KW-0812">Transmembrane</keyword>
<keyword id="KW-1133">Transmembrane helix</keyword>
<keyword id="KW-0813">Transport</keyword>
<accession>Q07757</accession>
<accession>A8INZ6</accession>